<proteinExistence type="inferred from homology"/>
<accession>P84019</accession>
<accession>O16837</accession>
<accession>P29561</accession>
<accession>Q9VA89</accession>
<feature type="signal peptide">
    <location>
        <begin position="1"/>
        <end position="23"/>
    </location>
</feature>
<feature type="chain" id="PRO_0000004849" description="Cecropin-C">
    <location>
        <begin position="24"/>
        <end position="62"/>
    </location>
</feature>
<feature type="modified residue" description="Arginine amide" evidence="1">
    <location>
        <position position="62"/>
    </location>
</feature>
<name>CECC_DROMA</name>
<protein>
    <recommendedName>
        <fullName>Cecropin-C</fullName>
    </recommendedName>
</protein>
<evidence type="ECO:0000250" key="1"/>
<evidence type="ECO:0000305" key="2"/>
<comment type="function">
    <text>Cecropins have lytic and antibacterial activity against several Gram-positive and Gram-negative bacteria.</text>
</comment>
<comment type="subcellular location">
    <subcellularLocation>
        <location>Secreted</location>
    </subcellularLocation>
</comment>
<comment type="similarity">
    <text evidence="2">Belongs to the cecropin family.</text>
</comment>
<reference key="1">
    <citation type="journal article" date="2002" name="J. Mol. Evol.">
        <title>Rapid evolution of the male-specific antibacterial protein andropin gene in Drosophila.</title>
        <authorList>
            <person name="Date-Ito A."/>
            <person name="Kasahara K."/>
            <person name="Sawai H."/>
            <person name="Chigusa S.I."/>
        </authorList>
    </citation>
    <scope>NUCLEOTIDE SEQUENCE [GENOMIC DNA]</scope>
    <source>
        <strain>Mauritius island</strain>
    </source>
</reference>
<sequence>MNFYKIFVFVALILAISIGQSEAGWLKKLGKRIERIGQHTRDATIQGLGIAQQAANVAATARG</sequence>
<organism>
    <name type="scientific">Drosophila mauritiana</name>
    <name type="common">Fruit fly</name>
    <dbReference type="NCBI Taxonomy" id="7226"/>
    <lineage>
        <taxon>Eukaryota</taxon>
        <taxon>Metazoa</taxon>
        <taxon>Ecdysozoa</taxon>
        <taxon>Arthropoda</taxon>
        <taxon>Hexapoda</taxon>
        <taxon>Insecta</taxon>
        <taxon>Pterygota</taxon>
        <taxon>Neoptera</taxon>
        <taxon>Endopterygota</taxon>
        <taxon>Diptera</taxon>
        <taxon>Brachycera</taxon>
        <taxon>Muscomorpha</taxon>
        <taxon>Ephydroidea</taxon>
        <taxon>Drosophilidae</taxon>
        <taxon>Drosophila</taxon>
        <taxon>Sophophora</taxon>
    </lineage>
</organism>
<keyword id="KW-0027">Amidation</keyword>
<keyword id="KW-0044">Antibiotic</keyword>
<keyword id="KW-0929">Antimicrobial</keyword>
<keyword id="KW-0391">Immunity</keyword>
<keyword id="KW-0399">Innate immunity</keyword>
<keyword id="KW-0964">Secreted</keyword>
<keyword id="KW-0732">Signal</keyword>
<dbReference type="EMBL" id="AF019019">
    <property type="protein sequence ID" value="AAB82516.1"/>
    <property type="molecule type" value="Genomic_DNA"/>
</dbReference>
<dbReference type="EMBL" id="AB047057">
    <property type="protein sequence ID" value="BAB78562.1"/>
    <property type="molecule type" value="Genomic_DNA"/>
</dbReference>
<dbReference type="SMR" id="P84019"/>
<dbReference type="EnsemblMetazoa" id="XM_033308237.1">
    <property type="protein sequence ID" value="XP_033164128.1"/>
    <property type="gene ID" value="LOC117143514"/>
</dbReference>
<dbReference type="Proteomes" id="UP000515162">
    <property type="component" value="Unplaced"/>
</dbReference>
<dbReference type="GO" id="GO:0005576">
    <property type="term" value="C:extracellular region"/>
    <property type="evidence" value="ECO:0000250"/>
    <property type="project" value="UniProtKB"/>
</dbReference>
<dbReference type="GO" id="GO:0005615">
    <property type="term" value="C:extracellular space"/>
    <property type="evidence" value="ECO:0007669"/>
    <property type="project" value="TreeGrafter"/>
</dbReference>
<dbReference type="GO" id="GO:0019731">
    <property type="term" value="P:antibacterial humoral response"/>
    <property type="evidence" value="ECO:0007669"/>
    <property type="project" value="InterPro"/>
</dbReference>
<dbReference type="GO" id="GO:0050829">
    <property type="term" value="P:defense response to Gram-negative bacterium"/>
    <property type="evidence" value="ECO:0000250"/>
    <property type="project" value="UniProtKB"/>
</dbReference>
<dbReference type="GO" id="GO:0050830">
    <property type="term" value="P:defense response to Gram-positive bacterium"/>
    <property type="evidence" value="ECO:0000250"/>
    <property type="project" value="UniProtKB"/>
</dbReference>
<dbReference type="GO" id="GO:0045087">
    <property type="term" value="P:innate immune response"/>
    <property type="evidence" value="ECO:0007669"/>
    <property type="project" value="UniProtKB-KW"/>
</dbReference>
<dbReference type="InterPro" id="IPR000875">
    <property type="entry name" value="Cecropin"/>
</dbReference>
<dbReference type="InterPro" id="IPR020400">
    <property type="entry name" value="Cecropin_insect"/>
</dbReference>
<dbReference type="PANTHER" id="PTHR38329">
    <property type="entry name" value="CECROPIN-A1-RELATED"/>
    <property type="match status" value="1"/>
</dbReference>
<dbReference type="PANTHER" id="PTHR38329:SF1">
    <property type="entry name" value="CECROPIN-A1-RELATED"/>
    <property type="match status" value="1"/>
</dbReference>
<dbReference type="Pfam" id="PF00272">
    <property type="entry name" value="Cecropin"/>
    <property type="match status" value="1"/>
</dbReference>
<dbReference type="PROSITE" id="PS00268">
    <property type="entry name" value="CECROPIN"/>
    <property type="match status" value="1"/>
</dbReference>
<gene>
    <name type="primary">CecC</name>
</gene>